<feature type="chain" id="PRO_1000022843" description="2-C-methyl-D-erythritol 2,4-cyclodiphosphate synthase">
    <location>
        <begin position="1"/>
        <end position="158"/>
    </location>
</feature>
<feature type="binding site" evidence="1">
    <location>
        <begin position="9"/>
        <end position="11"/>
    </location>
    <ligand>
        <name>4-CDP-2-C-methyl-D-erythritol 2-phosphate</name>
        <dbReference type="ChEBI" id="CHEBI:57919"/>
    </ligand>
</feature>
<feature type="binding site" evidence="1">
    <location>
        <position position="9"/>
    </location>
    <ligand>
        <name>a divalent metal cation</name>
        <dbReference type="ChEBI" id="CHEBI:60240"/>
    </ligand>
</feature>
<feature type="binding site" evidence="1">
    <location>
        <position position="11"/>
    </location>
    <ligand>
        <name>a divalent metal cation</name>
        <dbReference type="ChEBI" id="CHEBI:60240"/>
    </ligand>
</feature>
<feature type="binding site" evidence="1">
    <location>
        <begin position="35"/>
        <end position="36"/>
    </location>
    <ligand>
        <name>4-CDP-2-C-methyl-D-erythritol 2-phosphate</name>
        <dbReference type="ChEBI" id="CHEBI:57919"/>
    </ligand>
</feature>
<feature type="binding site" evidence="1">
    <location>
        <position position="43"/>
    </location>
    <ligand>
        <name>a divalent metal cation</name>
        <dbReference type="ChEBI" id="CHEBI:60240"/>
    </ligand>
</feature>
<feature type="binding site" evidence="1">
    <location>
        <begin position="57"/>
        <end position="59"/>
    </location>
    <ligand>
        <name>4-CDP-2-C-methyl-D-erythritol 2-phosphate</name>
        <dbReference type="ChEBI" id="CHEBI:57919"/>
    </ligand>
</feature>
<feature type="binding site" evidence="1">
    <location>
        <begin position="62"/>
        <end position="66"/>
    </location>
    <ligand>
        <name>4-CDP-2-C-methyl-D-erythritol 2-phosphate</name>
        <dbReference type="ChEBI" id="CHEBI:57919"/>
    </ligand>
</feature>
<feature type="binding site" evidence="1">
    <location>
        <begin position="133"/>
        <end position="136"/>
    </location>
    <ligand>
        <name>4-CDP-2-C-methyl-D-erythritol 2-phosphate</name>
        <dbReference type="ChEBI" id="CHEBI:57919"/>
    </ligand>
</feature>
<feature type="binding site" evidence="1">
    <location>
        <position position="140"/>
    </location>
    <ligand>
        <name>4-CDP-2-C-methyl-D-erythritol 2-phosphate</name>
        <dbReference type="ChEBI" id="CHEBI:57919"/>
    </ligand>
</feature>
<feature type="binding site" evidence="1">
    <location>
        <position position="143"/>
    </location>
    <ligand>
        <name>4-CDP-2-C-methyl-D-erythritol 2-phosphate</name>
        <dbReference type="ChEBI" id="CHEBI:57919"/>
    </ligand>
</feature>
<feature type="site" description="Transition state stabilizer" evidence="1">
    <location>
        <position position="35"/>
    </location>
</feature>
<feature type="site" description="Transition state stabilizer" evidence="1">
    <location>
        <position position="134"/>
    </location>
</feature>
<gene>
    <name evidence="1" type="primary">ispF</name>
    <name type="ordered locus">CGSHiEE_08820</name>
</gene>
<keyword id="KW-0414">Isoprene biosynthesis</keyword>
<keyword id="KW-0456">Lyase</keyword>
<keyword id="KW-0479">Metal-binding</keyword>
<name>ISPF_HAEIE</name>
<proteinExistence type="inferred from homology"/>
<dbReference type="EC" id="4.6.1.12" evidence="1"/>
<dbReference type="EMBL" id="CP000671">
    <property type="protein sequence ID" value="ABQ99061.1"/>
    <property type="molecule type" value="Genomic_DNA"/>
</dbReference>
<dbReference type="SMR" id="A5UE60"/>
<dbReference type="KEGG" id="hip:CGSHiEE_08820"/>
<dbReference type="HOGENOM" id="CLU_084630_2_0_6"/>
<dbReference type="UniPathway" id="UPA00056">
    <property type="reaction ID" value="UER00095"/>
</dbReference>
<dbReference type="GO" id="GO:0008685">
    <property type="term" value="F:2-C-methyl-D-erythritol 2,4-cyclodiphosphate synthase activity"/>
    <property type="evidence" value="ECO:0007669"/>
    <property type="project" value="UniProtKB-UniRule"/>
</dbReference>
<dbReference type="GO" id="GO:0046872">
    <property type="term" value="F:metal ion binding"/>
    <property type="evidence" value="ECO:0007669"/>
    <property type="project" value="UniProtKB-KW"/>
</dbReference>
<dbReference type="GO" id="GO:0019288">
    <property type="term" value="P:isopentenyl diphosphate biosynthetic process, methylerythritol 4-phosphate pathway"/>
    <property type="evidence" value="ECO:0007669"/>
    <property type="project" value="UniProtKB-UniRule"/>
</dbReference>
<dbReference type="GO" id="GO:0016114">
    <property type="term" value="P:terpenoid biosynthetic process"/>
    <property type="evidence" value="ECO:0007669"/>
    <property type="project" value="InterPro"/>
</dbReference>
<dbReference type="CDD" id="cd00554">
    <property type="entry name" value="MECDP_synthase"/>
    <property type="match status" value="1"/>
</dbReference>
<dbReference type="FunFam" id="3.30.1330.50:FF:000001">
    <property type="entry name" value="2-C-methyl-D-erythritol 2,4-cyclodiphosphate synthase"/>
    <property type="match status" value="1"/>
</dbReference>
<dbReference type="Gene3D" id="3.30.1330.50">
    <property type="entry name" value="2-C-methyl-D-erythritol 2,4-cyclodiphosphate synthase"/>
    <property type="match status" value="1"/>
</dbReference>
<dbReference type="HAMAP" id="MF_00107">
    <property type="entry name" value="IspF"/>
    <property type="match status" value="1"/>
</dbReference>
<dbReference type="InterPro" id="IPR003526">
    <property type="entry name" value="MECDP_synthase"/>
</dbReference>
<dbReference type="InterPro" id="IPR020555">
    <property type="entry name" value="MECDP_synthase_CS"/>
</dbReference>
<dbReference type="InterPro" id="IPR036571">
    <property type="entry name" value="MECDP_synthase_sf"/>
</dbReference>
<dbReference type="NCBIfam" id="TIGR00151">
    <property type="entry name" value="ispF"/>
    <property type="match status" value="1"/>
</dbReference>
<dbReference type="PANTHER" id="PTHR43181">
    <property type="entry name" value="2-C-METHYL-D-ERYTHRITOL 2,4-CYCLODIPHOSPHATE SYNTHASE, CHLOROPLASTIC"/>
    <property type="match status" value="1"/>
</dbReference>
<dbReference type="PANTHER" id="PTHR43181:SF1">
    <property type="entry name" value="2-C-METHYL-D-ERYTHRITOL 2,4-CYCLODIPHOSPHATE SYNTHASE, CHLOROPLASTIC"/>
    <property type="match status" value="1"/>
</dbReference>
<dbReference type="Pfam" id="PF02542">
    <property type="entry name" value="YgbB"/>
    <property type="match status" value="1"/>
</dbReference>
<dbReference type="SUPFAM" id="SSF69765">
    <property type="entry name" value="IpsF-like"/>
    <property type="match status" value="1"/>
</dbReference>
<dbReference type="PROSITE" id="PS01350">
    <property type="entry name" value="ISPF"/>
    <property type="match status" value="1"/>
</dbReference>
<organism>
    <name type="scientific">Haemophilus influenzae (strain PittEE)</name>
    <dbReference type="NCBI Taxonomy" id="374930"/>
    <lineage>
        <taxon>Bacteria</taxon>
        <taxon>Pseudomonadati</taxon>
        <taxon>Pseudomonadota</taxon>
        <taxon>Gammaproteobacteria</taxon>
        <taxon>Pasteurellales</taxon>
        <taxon>Pasteurellaceae</taxon>
        <taxon>Haemophilus</taxon>
    </lineage>
</organism>
<sequence>MIRIGHGFDVHAFGEDRPLIIGGVEVPYHTGFIAHSDGDVALHALTDAILGAAALGDIGKLFPDTDMQYKNADSRGLLREAFRQVQEKGYKIGNVDITIIAQAPKMRPHIDAMRAKIAEDLQCDIEQVNVKATTTEKLGFTGRQEGIACEAVALLIRQ</sequence>
<comment type="function">
    <text evidence="1">Involved in the biosynthesis of isopentenyl diphosphate (IPP) and dimethylallyl diphosphate (DMAPP), two major building blocks of isoprenoid compounds. Catalyzes the conversion of 4-diphosphocytidyl-2-C-methyl-D-erythritol 2-phosphate (CDP-ME2P) to 2-C-methyl-D-erythritol 2,4-cyclodiphosphate (ME-CPP) with a corresponding release of cytidine 5-monophosphate (CMP).</text>
</comment>
<comment type="catalytic activity">
    <reaction evidence="1">
        <text>4-CDP-2-C-methyl-D-erythritol 2-phosphate = 2-C-methyl-D-erythritol 2,4-cyclic diphosphate + CMP</text>
        <dbReference type="Rhea" id="RHEA:23864"/>
        <dbReference type="ChEBI" id="CHEBI:57919"/>
        <dbReference type="ChEBI" id="CHEBI:58483"/>
        <dbReference type="ChEBI" id="CHEBI:60377"/>
        <dbReference type="EC" id="4.6.1.12"/>
    </reaction>
</comment>
<comment type="cofactor">
    <cofactor evidence="1">
        <name>a divalent metal cation</name>
        <dbReference type="ChEBI" id="CHEBI:60240"/>
    </cofactor>
    <text evidence="1">Binds 1 divalent metal cation per subunit.</text>
</comment>
<comment type="pathway">
    <text evidence="1">Isoprenoid biosynthesis; isopentenyl diphosphate biosynthesis via DXP pathway; isopentenyl diphosphate from 1-deoxy-D-xylulose 5-phosphate: step 4/6.</text>
</comment>
<comment type="subunit">
    <text evidence="1">Homotrimer.</text>
</comment>
<comment type="similarity">
    <text evidence="1">Belongs to the IspF family.</text>
</comment>
<evidence type="ECO:0000255" key="1">
    <source>
        <dbReference type="HAMAP-Rule" id="MF_00107"/>
    </source>
</evidence>
<reference key="1">
    <citation type="journal article" date="2007" name="Genome Biol.">
        <title>Characterization and modeling of the Haemophilus influenzae core and supragenomes based on the complete genomic sequences of Rd and 12 clinical nontypeable strains.</title>
        <authorList>
            <person name="Hogg J.S."/>
            <person name="Hu F.Z."/>
            <person name="Janto B."/>
            <person name="Boissy R."/>
            <person name="Hayes J."/>
            <person name="Keefe R."/>
            <person name="Post J.C."/>
            <person name="Ehrlich G.D."/>
        </authorList>
    </citation>
    <scope>NUCLEOTIDE SEQUENCE [LARGE SCALE GENOMIC DNA]</scope>
    <source>
        <strain>PittEE</strain>
    </source>
</reference>
<accession>A5UE60</accession>
<protein>
    <recommendedName>
        <fullName evidence="1">2-C-methyl-D-erythritol 2,4-cyclodiphosphate synthase</fullName>
        <shortName evidence="1">MECDP-synthase</shortName>
        <shortName evidence="1">MECPP-synthase</shortName>
        <shortName evidence="1">MECPS</shortName>
        <ecNumber evidence="1">4.6.1.12</ecNumber>
    </recommendedName>
</protein>